<accession>A8M6W7</accession>
<feature type="chain" id="PRO_0000387737" description="Acetaldehyde dehydrogenase 2">
    <location>
        <begin position="1"/>
        <end position="295"/>
    </location>
</feature>
<feature type="active site" description="Acyl-thioester intermediate" evidence="1">
    <location>
        <position position="132"/>
    </location>
</feature>
<feature type="binding site" evidence="1">
    <location>
        <begin position="17"/>
        <end position="20"/>
    </location>
    <ligand>
        <name>NAD(+)</name>
        <dbReference type="ChEBI" id="CHEBI:57540"/>
    </ligand>
</feature>
<feature type="binding site" evidence="1">
    <location>
        <begin position="164"/>
        <end position="172"/>
    </location>
    <ligand>
        <name>NAD(+)</name>
        <dbReference type="ChEBI" id="CHEBI:57540"/>
    </ligand>
</feature>
<feature type="binding site" evidence="1">
    <location>
        <position position="275"/>
    </location>
    <ligand>
        <name>NAD(+)</name>
        <dbReference type="ChEBI" id="CHEBI:57540"/>
    </ligand>
</feature>
<gene>
    <name type="ordered locus">Sare_4566</name>
</gene>
<name>ACDH2_SALAI</name>
<keyword id="KW-0058">Aromatic hydrocarbons catabolism</keyword>
<keyword id="KW-0520">NAD</keyword>
<keyword id="KW-0560">Oxidoreductase</keyword>
<comment type="catalytic activity">
    <reaction evidence="1">
        <text>acetaldehyde + NAD(+) + CoA = acetyl-CoA + NADH + H(+)</text>
        <dbReference type="Rhea" id="RHEA:23288"/>
        <dbReference type="ChEBI" id="CHEBI:15343"/>
        <dbReference type="ChEBI" id="CHEBI:15378"/>
        <dbReference type="ChEBI" id="CHEBI:57287"/>
        <dbReference type="ChEBI" id="CHEBI:57288"/>
        <dbReference type="ChEBI" id="CHEBI:57540"/>
        <dbReference type="ChEBI" id="CHEBI:57945"/>
        <dbReference type="EC" id="1.2.1.10"/>
    </reaction>
</comment>
<comment type="similarity">
    <text evidence="1">Belongs to the acetaldehyde dehydrogenase family.</text>
</comment>
<dbReference type="EC" id="1.2.1.10" evidence="1"/>
<dbReference type="EMBL" id="CP000850">
    <property type="protein sequence ID" value="ABW00335.1"/>
    <property type="molecule type" value="Genomic_DNA"/>
</dbReference>
<dbReference type="SMR" id="A8M6W7"/>
<dbReference type="STRING" id="391037.Sare_4566"/>
<dbReference type="KEGG" id="saq:Sare_4566"/>
<dbReference type="PATRIC" id="fig|391037.6.peg.4614"/>
<dbReference type="eggNOG" id="COG4569">
    <property type="taxonomic scope" value="Bacteria"/>
</dbReference>
<dbReference type="HOGENOM" id="CLU_062208_0_0_11"/>
<dbReference type="OrthoDB" id="9786743at2"/>
<dbReference type="GO" id="GO:0008774">
    <property type="term" value="F:acetaldehyde dehydrogenase (acetylating) activity"/>
    <property type="evidence" value="ECO:0007669"/>
    <property type="project" value="UniProtKB-UniRule"/>
</dbReference>
<dbReference type="GO" id="GO:0051287">
    <property type="term" value="F:NAD binding"/>
    <property type="evidence" value="ECO:0007669"/>
    <property type="project" value="UniProtKB-UniRule"/>
</dbReference>
<dbReference type="GO" id="GO:0009056">
    <property type="term" value="P:catabolic process"/>
    <property type="evidence" value="ECO:0007669"/>
    <property type="project" value="UniProtKB-KW"/>
</dbReference>
<dbReference type="CDD" id="cd23933">
    <property type="entry name" value="ALDH_C"/>
    <property type="match status" value="1"/>
</dbReference>
<dbReference type="Gene3D" id="3.30.360.10">
    <property type="entry name" value="Dihydrodipicolinate Reductase, domain 2"/>
    <property type="match status" value="1"/>
</dbReference>
<dbReference type="Gene3D" id="3.40.50.720">
    <property type="entry name" value="NAD(P)-binding Rossmann-like Domain"/>
    <property type="match status" value="1"/>
</dbReference>
<dbReference type="HAMAP" id="MF_01657">
    <property type="entry name" value="Ac_ald_DH_ac"/>
    <property type="match status" value="1"/>
</dbReference>
<dbReference type="InterPro" id="IPR003361">
    <property type="entry name" value="Acetaldehyde_dehydrogenase"/>
</dbReference>
<dbReference type="InterPro" id="IPR015426">
    <property type="entry name" value="Acetylaldehyde_DH_C"/>
</dbReference>
<dbReference type="InterPro" id="IPR036291">
    <property type="entry name" value="NAD(P)-bd_dom_sf"/>
</dbReference>
<dbReference type="InterPro" id="IPR000534">
    <property type="entry name" value="Semialdehyde_DH_NAD-bd"/>
</dbReference>
<dbReference type="NCBIfam" id="TIGR03215">
    <property type="entry name" value="ac_ald_DH_ac"/>
    <property type="match status" value="1"/>
</dbReference>
<dbReference type="NCBIfam" id="NF006157">
    <property type="entry name" value="PRK08300.1"/>
    <property type="match status" value="1"/>
</dbReference>
<dbReference type="Pfam" id="PF09290">
    <property type="entry name" value="AcetDehyd-dimer"/>
    <property type="match status" value="1"/>
</dbReference>
<dbReference type="PIRSF" id="PIRSF015689">
    <property type="entry name" value="Actaldh_dh_actl"/>
    <property type="match status" value="1"/>
</dbReference>
<dbReference type="SMART" id="SM00859">
    <property type="entry name" value="Semialdhyde_dh"/>
    <property type="match status" value="1"/>
</dbReference>
<dbReference type="SUPFAM" id="SSF55347">
    <property type="entry name" value="Glyceraldehyde-3-phosphate dehydrogenase-like, C-terminal domain"/>
    <property type="match status" value="1"/>
</dbReference>
<dbReference type="SUPFAM" id="SSF51735">
    <property type="entry name" value="NAD(P)-binding Rossmann-fold domains"/>
    <property type="match status" value="1"/>
</dbReference>
<evidence type="ECO:0000255" key="1">
    <source>
        <dbReference type="HAMAP-Rule" id="MF_01657"/>
    </source>
</evidence>
<organism>
    <name type="scientific">Salinispora arenicola (strain CNS-205)</name>
    <dbReference type="NCBI Taxonomy" id="391037"/>
    <lineage>
        <taxon>Bacteria</taxon>
        <taxon>Bacillati</taxon>
        <taxon>Actinomycetota</taxon>
        <taxon>Actinomycetes</taxon>
        <taxon>Micromonosporales</taxon>
        <taxon>Micromonosporaceae</taxon>
        <taxon>Salinispora</taxon>
    </lineage>
</organism>
<proteinExistence type="inferred from homology"/>
<reference key="1">
    <citation type="submission" date="2007-10" db="EMBL/GenBank/DDBJ databases">
        <title>Complete sequence of Salinispora arenicola CNS-205.</title>
        <authorList>
            <consortium name="US DOE Joint Genome Institute"/>
            <person name="Copeland A."/>
            <person name="Lucas S."/>
            <person name="Lapidus A."/>
            <person name="Barry K."/>
            <person name="Glavina del Rio T."/>
            <person name="Dalin E."/>
            <person name="Tice H."/>
            <person name="Pitluck S."/>
            <person name="Foster B."/>
            <person name="Schmutz J."/>
            <person name="Larimer F."/>
            <person name="Land M."/>
            <person name="Hauser L."/>
            <person name="Kyrpides N."/>
            <person name="Ivanova N."/>
            <person name="Jensen P.R."/>
            <person name="Moore B.S."/>
            <person name="Penn K."/>
            <person name="Jenkins C."/>
            <person name="Udwary D."/>
            <person name="Xiang L."/>
            <person name="Gontang E."/>
            <person name="Richardson P."/>
        </authorList>
    </citation>
    <scope>NUCLEOTIDE SEQUENCE [LARGE SCALE GENOMIC DNA]</scope>
    <source>
        <strain>CNS-205</strain>
    </source>
</reference>
<protein>
    <recommendedName>
        <fullName evidence="1">Acetaldehyde dehydrogenase 2</fullName>
        <ecNumber evidence="1">1.2.1.10</ecNumber>
    </recommendedName>
    <alternativeName>
        <fullName evidence="1">Acetaldehyde dehydrogenase [acetylating] 2</fullName>
    </alternativeName>
</protein>
<sequence>MSTQTHPAPLRTAIVGTGNIGTDLLLKVEASPLLTCVLFAGRRAESPGIELARGRGVATSTGGIDAVVDAADDIDLVFDATSARDAVRHWAVIKPLGLPFIDLTPANQGKFCVPALNLEDCLDEQYLSMVTCGGQAAVPMARCITQIAGHVDYLEIVSASASASVGPASRANLDEYVHTTEQATAEFCSTARTKTVLIINPADPGIVMRNSIAVSTTERIDIDALRDSVTAMEKEIHSYVPGYRIVVPPVATGDCYLLTVEVEGLGDYFPRSAGNLDIITCAAVAAAEARSGLRR</sequence>